<protein>
    <recommendedName>
        <fullName>Adenylate dimethylallyltransferase</fullName>
        <ecNumber>2.5.1.27</ecNumber>
    </recommendedName>
    <alternativeName>
        <fullName>Dimethylallyl transferase</fullName>
    </alternativeName>
    <alternativeName>
        <fullName>Isopentenyl transferase</fullName>
    </alternativeName>
</protein>
<name>IPT_RHOFA</name>
<feature type="chain" id="PRO_0000216440" description="Adenylate dimethylallyltransferase">
    <location>
        <begin position="1"/>
        <end position="255"/>
    </location>
</feature>
<reference key="1">
    <citation type="journal article" date="1994" name="J. Bacteriol.">
        <title>The fas operon of Rhodococcus fascians encodes new genes required for efficient fasciation of host plants.</title>
        <authorList>
            <person name="Crespi M."/>
            <person name="Vereecke D."/>
            <person name="Temmerman W."/>
            <person name="van Montagu M."/>
            <person name="Desomer J."/>
        </authorList>
    </citation>
    <scope>NUCLEOTIDE SEQUENCE [GENOMIC DNA]</scope>
    <source>
        <strain>D188</strain>
    </source>
</reference>
<reference key="2">
    <citation type="journal article" date="1992" name="EMBO J.">
        <title>Fasciation induction by the phytopathogen Rhodococcus fascians depends upon a linear plasmid encoding a cytokinin synthase gene.</title>
        <authorList>
            <person name="Crespi M."/>
            <person name="Messens E."/>
            <person name="Caplan A.B."/>
            <person name="van Montagu M."/>
            <person name="Desomer J."/>
        </authorList>
    </citation>
    <scope>NUCLEOTIDE SEQUENCE [GENOMIC DNA]</scope>
    <source>
        <strain>D188</strain>
    </source>
</reference>
<dbReference type="EC" id="2.5.1.27"/>
<dbReference type="EMBL" id="Z29635">
    <property type="protein sequence ID" value="CAA82744.1"/>
    <property type="molecule type" value="Genomic_DNA"/>
</dbReference>
<dbReference type="EMBL" id="X62428">
    <property type="protein sequence ID" value="CAA44294.1"/>
    <property type="molecule type" value="Genomic_DNA"/>
</dbReference>
<dbReference type="PIR" id="D55578">
    <property type="entry name" value="D55578"/>
</dbReference>
<dbReference type="RefSeq" id="WP_015586134.1">
    <property type="nucleotide sequence ID" value="NZ_NPFU01000019.1"/>
</dbReference>
<dbReference type="RefSeq" id="YP_007878707.1">
    <property type="nucleotide sequence ID" value="NC_021080.1"/>
</dbReference>
<dbReference type="SMR" id="P46376"/>
<dbReference type="STRING" id="1443905.GCA_000761075_00037"/>
<dbReference type="GO" id="GO:0009824">
    <property type="term" value="F:AMP dimethylallyltransferase activity"/>
    <property type="evidence" value="ECO:0007669"/>
    <property type="project" value="UniProtKB-EC"/>
</dbReference>
<dbReference type="GO" id="GO:0009691">
    <property type="term" value="P:cytokinin biosynthetic process"/>
    <property type="evidence" value="ECO:0007669"/>
    <property type="project" value="UniProtKB-KW"/>
</dbReference>
<dbReference type="Gene3D" id="1.10.287.890">
    <property type="entry name" value="Crystal structure of tRNA isopentenylpyrophosphate transferase (bh2366) domain"/>
    <property type="match status" value="1"/>
</dbReference>
<dbReference type="Gene3D" id="3.40.50.300">
    <property type="entry name" value="P-loop containing nucleotide triphosphate hydrolases"/>
    <property type="match status" value="1"/>
</dbReference>
<dbReference type="InterPro" id="IPR027417">
    <property type="entry name" value="P-loop_NTPase"/>
</dbReference>
<dbReference type="InterPro" id="IPR002648">
    <property type="entry name" value="Tzs"/>
</dbReference>
<dbReference type="Pfam" id="PF01745">
    <property type="entry name" value="IPT"/>
    <property type="match status" value="1"/>
</dbReference>
<dbReference type="PIRSF" id="PIRSF000507">
    <property type="entry name" value="IPT"/>
    <property type="match status" value="1"/>
</dbReference>
<dbReference type="SUPFAM" id="SSF52540">
    <property type="entry name" value="P-loop containing nucleoside triphosphate hydrolases"/>
    <property type="match status" value="1"/>
</dbReference>
<geneLocation type="plasmid">
    <name>pFiD188</name>
</geneLocation>
<accession>P46376</accession>
<organism>
    <name type="scientific">Rhodococcoides fascians</name>
    <name type="common">Rhodococcus fascians</name>
    <dbReference type="NCBI Taxonomy" id="1828"/>
    <lineage>
        <taxon>Bacteria</taxon>
        <taxon>Bacillati</taxon>
        <taxon>Actinomycetota</taxon>
        <taxon>Actinomycetes</taxon>
        <taxon>Mycobacteriales</taxon>
        <taxon>Nocardiaceae</taxon>
        <taxon>Rhodococcoides</taxon>
    </lineage>
</organism>
<keyword id="KW-0203">Cytokinin biosynthesis</keyword>
<keyword id="KW-0614">Plasmid</keyword>
<keyword id="KW-0808">Transferase</keyword>
<sequence length="255" mass="28035">MKESTMAQTQARFDRVRWEPGVYAIVGATGIGKSAEASKLALSHSAPIVVADRIQCYSDLLVTSGRAFDAKVEGLNRVWLDNRTIHQGNFDPDEAFDRLIKVLTSYVDRGEAVVMEGGSISLILRFAQTISNLPFPAVVNVMPIPDRQHYFAQQCARARQMLRGDSTGRNLLTELAEAWVLGDQHNFIASVAGLDCVLDWCATHSVTPEELANRDLTTEVLDELAASMGGRYVEHGVLQQEIFLRTFGAPGVTAR</sequence>
<gene>
    <name type="primary">fas4</name>
    <name type="synonym">ipt</name>
</gene>
<proteinExistence type="evidence at transcript level"/>
<evidence type="ECO:0000250" key="1"/>
<evidence type="ECO:0000305" key="2"/>
<comment type="function">
    <text evidence="1">Transfers dimethylallyl groups to AMP as part of the biosynthesis of cytokinin phytohormones.</text>
</comment>
<comment type="catalytic activity">
    <reaction>
        <text>dimethylallyl diphosphate + AMP = N(6)-(dimethylallyl)adenosine 5'-phosphate + diphosphate</text>
        <dbReference type="Rhea" id="RHEA:15285"/>
        <dbReference type="ChEBI" id="CHEBI:33019"/>
        <dbReference type="ChEBI" id="CHEBI:57526"/>
        <dbReference type="ChEBI" id="CHEBI:57623"/>
        <dbReference type="ChEBI" id="CHEBI:456215"/>
        <dbReference type="EC" id="2.5.1.27"/>
    </reaction>
</comment>
<comment type="induction">
    <text>During the interaction with host plants.</text>
</comment>
<comment type="similarity">
    <text evidence="2">Belongs to the isopentenyl transferase family.</text>
</comment>